<comment type="function">
    <text evidence="1">IGPS catalyzes the conversion of PRFAR and glutamine to IGP, AICAR and glutamate. The HisF subunit catalyzes the cyclization activity that produces IGP and AICAR from PRFAR using the ammonia provided by the HisH subunit.</text>
</comment>
<comment type="catalytic activity">
    <reaction evidence="1">
        <text>5-[(5-phospho-1-deoxy-D-ribulos-1-ylimino)methylamino]-1-(5-phospho-beta-D-ribosyl)imidazole-4-carboxamide + L-glutamine = D-erythro-1-(imidazol-4-yl)glycerol 3-phosphate + 5-amino-1-(5-phospho-beta-D-ribosyl)imidazole-4-carboxamide + L-glutamate + H(+)</text>
        <dbReference type="Rhea" id="RHEA:24793"/>
        <dbReference type="ChEBI" id="CHEBI:15378"/>
        <dbReference type="ChEBI" id="CHEBI:29985"/>
        <dbReference type="ChEBI" id="CHEBI:58278"/>
        <dbReference type="ChEBI" id="CHEBI:58359"/>
        <dbReference type="ChEBI" id="CHEBI:58475"/>
        <dbReference type="ChEBI" id="CHEBI:58525"/>
        <dbReference type="EC" id="4.3.2.10"/>
    </reaction>
</comment>
<comment type="pathway">
    <text evidence="1">Amino-acid biosynthesis; L-histidine biosynthesis; L-histidine from 5-phospho-alpha-D-ribose 1-diphosphate: step 5/9.</text>
</comment>
<comment type="subunit">
    <text evidence="1">Heterodimer of HisH and HisF.</text>
</comment>
<comment type="subcellular location">
    <subcellularLocation>
        <location evidence="1">Cytoplasm</location>
    </subcellularLocation>
</comment>
<comment type="similarity">
    <text evidence="1">Belongs to the HisA/HisF family.</text>
</comment>
<reference key="1">
    <citation type="journal article" date="2008" name="PLoS Genet.">
        <title>Complete genome sequence of the complex carbohydrate-degrading marine bacterium, Saccharophagus degradans strain 2-40 T.</title>
        <authorList>
            <person name="Weiner R.M."/>
            <person name="Taylor L.E. II"/>
            <person name="Henrissat B."/>
            <person name="Hauser L."/>
            <person name="Land M."/>
            <person name="Coutinho P.M."/>
            <person name="Rancurel C."/>
            <person name="Saunders E.H."/>
            <person name="Longmire A.G."/>
            <person name="Zhang H."/>
            <person name="Bayer E.A."/>
            <person name="Gilbert H.J."/>
            <person name="Larimer F."/>
            <person name="Zhulin I.B."/>
            <person name="Ekborg N.A."/>
            <person name="Lamed R."/>
            <person name="Richardson P.M."/>
            <person name="Borovok I."/>
            <person name="Hutcheson S."/>
        </authorList>
    </citation>
    <scope>NUCLEOTIDE SEQUENCE [LARGE SCALE GENOMIC DNA]</scope>
    <source>
        <strain>2-40 / ATCC 43961 / DSM 17024</strain>
    </source>
</reference>
<keyword id="KW-0028">Amino-acid biosynthesis</keyword>
<keyword id="KW-0963">Cytoplasm</keyword>
<keyword id="KW-0368">Histidine biosynthesis</keyword>
<keyword id="KW-0456">Lyase</keyword>
<keyword id="KW-1185">Reference proteome</keyword>
<dbReference type="EC" id="4.3.2.10" evidence="1"/>
<dbReference type="EMBL" id="CP000282">
    <property type="protein sequence ID" value="ABD79754.1"/>
    <property type="molecule type" value="Genomic_DNA"/>
</dbReference>
<dbReference type="RefSeq" id="WP_011466975.1">
    <property type="nucleotide sequence ID" value="NC_007912.1"/>
</dbReference>
<dbReference type="SMR" id="Q21NH5"/>
<dbReference type="STRING" id="203122.Sde_0490"/>
<dbReference type="GeneID" id="98612190"/>
<dbReference type="KEGG" id="sde:Sde_0490"/>
<dbReference type="eggNOG" id="COG0107">
    <property type="taxonomic scope" value="Bacteria"/>
</dbReference>
<dbReference type="HOGENOM" id="CLU_048577_4_0_6"/>
<dbReference type="OrthoDB" id="9781903at2"/>
<dbReference type="UniPathway" id="UPA00031">
    <property type="reaction ID" value="UER00010"/>
</dbReference>
<dbReference type="Proteomes" id="UP000001947">
    <property type="component" value="Chromosome"/>
</dbReference>
<dbReference type="GO" id="GO:0005737">
    <property type="term" value="C:cytoplasm"/>
    <property type="evidence" value="ECO:0007669"/>
    <property type="project" value="UniProtKB-SubCell"/>
</dbReference>
<dbReference type="GO" id="GO:0000107">
    <property type="term" value="F:imidazoleglycerol-phosphate synthase activity"/>
    <property type="evidence" value="ECO:0007669"/>
    <property type="project" value="UniProtKB-UniRule"/>
</dbReference>
<dbReference type="GO" id="GO:0016829">
    <property type="term" value="F:lyase activity"/>
    <property type="evidence" value="ECO:0007669"/>
    <property type="project" value="UniProtKB-KW"/>
</dbReference>
<dbReference type="GO" id="GO:0000105">
    <property type="term" value="P:L-histidine biosynthetic process"/>
    <property type="evidence" value="ECO:0007669"/>
    <property type="project" value="UniProtKB-UniRule"/>
</dbReference>
<dbReference type="CDD" id="cd04731">
    <property type="entry name" value="HisF"/>
    <property type="match status" value="1"/>
</dbReference>
<dbReference type="FunFam" id="3.20.20.70:FF:000006">
    <property type="entry name" value="Imidazole glycerol phosphate synthase subunit HisF"/>
    <property type="match status" value="1"/>
</dbReference>
<dbReference type="Gene3D" id="3.20.20.70">
    <property type="entry name" value="Aldolase class I"/>
    <property type="match status" value="1"/>
</dbReference>
<dbReference type="HAMAP" id="MF_01013">
    <property type="entry name" value="HisF"/>
    <property type="match status" value="1"/>
</dbReference>
<dbReference type="InterPro" id="IPR013785">
    <property type="entry name" value="Aldolase_TIM"/>
</dbReference>
<dbReference type="InterPro" id="IPR006062">
    <property type="entry name" value="His_biosynth"/>
</dbReference>
<dbReference type="InterPro" id="IPR004651">
    <property type="entry name" value="HisF"/>
</dbReference>
<dbReference type="InterPro" id="IPR050064">
    <property type="entry name" value="IGPS_HisA/HisF"/>
</dbReference>
<dbReference type="InterPro" id="IPR011060">
    <property type="entry name" value="RibuloseP-bd_barrel"/>
</dbReference>
<dbReference type="NCBIfam" id="TIGR00735">
    <property type="entry name" value="hisF"/>
    <property type="match status" value="1"/>
</dbReference>
<dbReference type="PANTHER" id="PTHR21235:SF2">
    <property type="entry name" value="IMIDAZOLE GLYCEROL PHOSPHATE SYNTHASE HISHF"/>
    <property type="match status" value="1"/>
</dbReference>
<dbReference type="PANTHER" id="PTHR21235">
    <property type="entry name" value="IMIDAZOLE GLYCEROL PHOSPHATE SYNTHASE SUBUNIT HISF/H IGP SYNTHASE SUBUNIT HISF/H"/>
    <property type="match status" value="1"/>
</dbReference>
<dbReference type="Pfam" id="PF00977">
    <property type="entry name" value="His_biosynth"/>
    <property type="match status" value="1"/>
</dbReference>
<dbReference type="SUPFAM" id="SSF51366">
    <property type="entry name" value="Ribulose-phoshate binding barrel"/>
    <property type="match status" value="1"/>
</dbReference>
<evidence type="ECO:0000255" key="1">
    <source>
        <dbReference type="HAMAP-Rule" id="MF_01013"/>
    </source>
</evidence>
<gene>
    <name evidence="1" type="primary">hisF</name>
    <name type="ordered locus">Sde_0490</name>
</gene>
<feature type="chain" id="PRO_1000063138" description="Imidazole glycerol phosphate synthase subunit HisF">
    <location>
        <begin position="1"/>
        <end position="257"/>
    </location>
</feature>
<feature type="active site" evidence="1">
    <location>
        <position position="12"/>
    </location>
</feature>
<feature type="active site" evidence="1">
    <location>
        <position position="131"/>
    </location>
</feature>
<protein>
    <recommendedName>
        <fullName evidence="1">Imidazole glycerol phosphate synthase subunit HisF</fullName>
        <ecNumber evidence="1">4.3.2.10</ecNumber>
    </recommendedName>
    <alternativeName>
        <fullName evidence="1">IGP synthase cyclase subunit</fullName>
    </alternativeName>
    <alternativeName>
        <fullName evidence="1">IGP synthase subunit HisF</fullName>
    </alternativeName>
    <alternativeName>
        <fullName evidence="1">ImGP synthase subunit HisF</fullName>
        <shortName evidence="1">IGPS subunit HisF</shortName>
    </alternativeName>
</protein>
<name>HIS6_SACD2</name>
<organism>
    <name type="scientific">Saccharophagus degradans (strain 2-40 / ATCC 43961 / DSM 17024)</name>
    <dbReference type="NCBI Taxonomy" id="203122"/>
    <lineage>
        <taxon>Bacteria</taxon>
        <taxon>Pseudomonadati</taxon>
        <taxon>Pseudomonadota</taxon>
        <taxon>Gammaproteobacteria</taxon>
        <taxon>Cellvibrionales</taxon>
        <taxon>Cellvibrionaceae</taxon>
        <taxon>Saccharophagus</taxon>
    </lineage>
</organism>
<proteinExistence type="inferred from homology"/>
<accession>Q21NH5</accession>
<sequence>MPLAKRIIPCLDVDKGRVVKGVQFVDIRDAGDPVEVAKKYNEQGADEITFLDITASVEGRETTVQTVEKIAAEVFIPLTVGGGIRTLEDIRTMLNAGADKVSINSAAVKDPEFVKAAAEGFGSQCIVVAIDAKKVSAEGEPPRWEIFTHGGRKPTGIDAIEWAIRMTDYGAGEILLTSMDKDGTKDGFDLAVTRAIADAVPVPVIASGGVGNLQHLVDGVIEGGADAVLAASIFHFGEYTVPQAKEYMQERGVEVRL</sequence>